<sequence>MELHFNLELVETYKSNSQKARILTEDWVYRQSYCPNCGNNPLNHFENNRPVADFYCNHCSEEFELKSKKGNFSSTINDGAYATMMKRVQADNNPNFFFLTYTKNFEVNNFLVLPKQFVTPKSIIQRKPLAPTARRAGWIGCNIDLSQVPSKGRIFLVQDGQVRDPEKVTKEFKQGLFLRKSSLSSRGWTIEILNCIDKIEGSEFTLEDMYRFESDLKNIFVKNNHIKEKIRQQLQILRDKEIIEFKGRGKYRKL</sequence>
<name>T2D1_STRPN</name>
<organism>
    <name type="scientific">Streptococcus pneumoniae serotype 4 (strain ATCC BAA-334 / TIGR4)</name>
    <dbReference type="NCBI Taxonomy" id="170187"/>
    <lineage>
        <taxon>Bacteria</taxon>
        <taxon>Bacillati</taxon>
        <taxon>Bacillota</taxon>
        <taxon>Bacilli</taxon>
        <taxon>Lactobacillales</taxon>
        <taxon>Streptococcaceae</taxon>
        <taxon>Streptococcus</taxon>
    </lineage>
</organism>
<dbReference type="EC" id="3.1.21.4" evidence="1"/>
<dbReference type="EMBL" id="M14340">
    <property type="protein sequence ID" value="AAA88577.2"/>
    <property type="molecule type" value="Genomic_DNA"/>
</dbReference>
<dbReference type="EMBL" id="AE005672">
    <property type="protein sequence ID" value="AAK75922.1"/>
    <property type="molecule type" value="Genomic_DNA"/>
</dbReference>
<dbReference type="PIR" id="A31975">
    <property type="entry name" value="A31975"/>
</dbReference>
<dbReference type="PIR" id="A95216">
    <property type="entry name" value="A95216"/>
</dbReference>
<dbReference type="RefSeq" id="WP_000418960.1">
    <property type="nucleotide sequence ID" value="NZ_CP155539.1"/>
</dbReference>
<dbReference type="PDB" id="4KYW">
    <property type="method" value="X-ray"/>
    <property type="resolution" value="2.35 A"/>
    <property type="chains" value="A=1-254"/>
</dbReference>
<dbReference type="PDBsum" id="4KYW"/>
<dbReference type="SMR" id="P0A459"/>
<dbReference type="REBASE" id="5187">
    <property type="entry name" value="SpnORF1850P"/>
</dbReference>
<dbReference type="REBASE" id="776">
    <property type="entry name" value="DpnI"/>
</dbReference>
<dbReference type="PaxDb" id="170187-SP_1850"/>
<dbReference type="EnsemblBacteria" id="AAK75922">
    <property type="protein sequence ID" value="AAK75922"/>
    <property type="gene ID" value="SP_1850"/>
</dbReference>
<dbReference type="KEGG" id="spn:SP_1850"/>
<dbReference type="eggNOG" id="ENOG502Z8N2">
    <property type="taxonomic scope" value="Bacteria"/>
</dbReference>
<dbReference type="BioCyc" id="SPNE170187:G1FZB-1880-MONOMER"/>
<dbReference type="EvolutionaryTrace" id="P0A459"/>
<dbReference type="PRO" id="PR:P0A459"/>
<dbReference type="Proteomes" id="UP000000585">
    <property type="component" value="Chromosome"/>
</dbReference>
<dbReference type="GO" id="GO:0009036">
    <property type="term" value="F:type II site-specific deoxyribonuclease activity"/>
    <property type="evidence" value="ECO:0007669"/>
    <property type="project" value="UniProtKB-EC"/>
</dbReference>
<dbReference type="GO" id="GO:0009307">
    <property type="term" value="P:DNA restriction-modification system"/>
    <property type="evidence" value="ECO:0007669"/>
    <property type="project" value="UniProtKB-KW"/>
</dbReference>
<dbReference type="CDD" id="cd22319">
    <property type="entry name" value="DpnI-like"/>
    <property type="match status" value="1"/>
</dbReference>
<dbReference type="Gene3D" id="3.40.210.30">
    <property type="entry name" value="Dam replacing family, catalytic PD-(D/E)XK domain"/>
    <property type="match status" value="1"/>
</dbReference>
<dbReference type="Gene3D" id="1.10.10.10">
    <property type="entry name" value="Winged helix-like DNA-binding domain superfamily/Winged helix DNA-binding domain"/>
    <property type="match status" value="1"/>
</dbReference>
<dbReference type="InterPro" id="IPR010324">
    <property type="entry name" value="DRP"/>
</dbReference>
<dbReference type="InterPro" id="IPR041368">
    <property type="entry name" value="DRP_C"/>
</dbReference>
<dbReference type="InterPro" id="IPR043025">
    <property type="entry name" value="DRP_PD-(D/E)XK_dom"/>
</dbReference>
<dbReference type="InterPro" id="IPR036388">
    <property type="entry name" value="WH-like_DNA-bd_sf"/>
</dbReference>
<dbReference type="Pfam" id="PF06044">
    <property type="entry name" value="DpnI"/>
    <property type="match status" value="1"/>
</dbReference>
<dbReference type="Pfam" id="PF17726">
    <property type="entry name" value="DpnI_C"/>
    <property type="match status" value="1"/>
</dbReference>
<reference key="1">
    <citation type="journal article" date="1986" name="Cell">
        <title>Genetic basis of the complementary DpnI and DpnII restriction systems of S. pneumoniae: an intercellular cassette mechanism.</title>
        <authorList>
            <person name="Lacks S.A."/>
            <person name="Mannarelli B.M."/>
            <person name="Springhorn S.S."/>
            <person name="Greenberg B."/>
        </authorList>
    </citation>
    <scope>NUCLEOTIDE SEQUENCE [GENOMIC DNA]</scope>
</reference>
<reference key="2">
    <citation type="journal article" date="1988" name="J. Biol. Chem.">
        <title>Proteins encoded by the DpnI restriction gene cassette. Hyperproduction and characterization of the DpnI endonuclease.</title>
        <authorList>
            <person name="de la Campa A.G."/>
            <person name="Springhorn S.S."/>
            <person name="Kale P."/>
            <person name="Lacks S.A."/>
        </authorList>
    </citation>
    <scope>NUCLEOTIDE SEQUENCE [GENOMIC DNA]</scope>
    <scope>PROTEIN SEQUENCE OF 1-10</scope>
    <scope>FUNCTION</scope>
    <scope>CATALYTIC ACTIVITY</scope>
</reference>
<reference key="3">
    <citation type="journal article" date="2001" name="Science">
        <title>Complete genome sequence of a virulent isolate of Streptococcus pneumoniae.</title>
        <authorList>
            <person name="Tettelin H."/>
            <person name="Nelson K.E."/>
            <person name="Paulsen I.T."/>
            <person name="Eisen J.A."/>
            <person name="Read T.D."/>
            <person name="Peterson S.N."/>
            <person name="Heidelberg J.F."/>
            <person name="DeBoy R.T."/>
            <person name="Haft D.H."/>
            <person name="Dodson R.J."/>
            <person name="Durkin A.S."/>
            <person name="Gwinn M.L."/>
            <person name="Kolonay J.F."/>
            <person name="Nelson W.C."/>
            <person name="Peterson J.D."/>
            <person name="Umayam L.A."/>
            <person name="White O."/>
            <person name="Salzberg S.L."/>
            <person name="Lewis M.R."/>
            <person name="Radune D."/>
            <person name="Holtzapple E.K."/>
            <person name="Khouri H.M."/>
            <person name="Wolf A.M."/>
            <person name="Utterback T.R."/>
            <person name="Hansen C.L."/>
            <person name="McDonald L.A."/>
            <person name="Feldblyum T.V."/>
            <person name="Angiuoli S.V."/>
            <person name="Dickinson T."/>
            <person name="Hickey E.K."/>
            <person name="Holt I.E."/>
            <person name="Loftus B.J."/>
            <person name="Yang F."/>
            <person name="Smith H.O."/>
            <person name="Venter J.C."/>
            <person name="Dougherty B.A."/>
            <person name="Morrison D.A."/>
            <person name="Hollingshead S.K."/>
            <person name="Fraser C.M."/>
        </authorList>
    </citation>
    <scope>NUCLEOTIDE SEQUENCE [LARGE SCALE GENOMIC DNA]</scope>
    <source>
        <strain>ATCC BAA-334 / TIGR4</strain>
    </source>
</reference>
<reference key="4">
    <citation type="journal article" date="2003" name="Nucleic Acids Res.">
        <title>A nomenclature for restriction enzymes, DNA methyltransferases, homing endonucleases and their genes.</title>
        <authorList>
            <person name="Roberts R.J."/>
            <person name="Belfort M."/>
            <person name="Bestor T."/>
            <person name="Bhagwat A.S."/>
            <person name="Bickle T.A."/>
            <person name="Bitinaite J."/>
            <person name="Blumenthal R.M."/>
            <person name="Degtyarev S.K."/>
            <person name="Dryden D.T."/>
            <person name="Dybvig K."/>
            <person name="Firman K."/>
            <person name="Gromova E.S."/>
            <person name="Gumport R.I."/>
            <person name="Halford S.E."/>
            <person name="Hattman S."/>
            <person name="Heitman J."/>
            <person name="Hornby D.P."/>
            <person name="Janulaitis A."/>
            <person name="Jeltsch A."/>
            <person name="Josephsen J."/>
            <person name="Kiss A."/>
            <person name="Klaenhammer T.R."/>
            <person name="Kobayashi I."/>
            <person name="Kong H."/>
            <person name="Krueger D.H."/>
            <person name="Lacks S."/>
            <person name="Marinus M.G."/>
            <person name="Miyahara M."/>
            <person name="Morgan R.D."/>
            <person name="Murray N.E."/>
            <person name="Nagaraja V."/>
            <person name="Piekarowicz A."/>
            <person name="Pingoud A."/>
            <person name="Raleigh E."/>
            <person name="Rao D.N."/>
            <person name="Reich N."/>
            <person name="Repin V.E."/>
            <person name="Selker E.U."/>
            <person name="Shaw P.C."/>
            <person name="Stein D.C."/>
            <person name="Stoddard B.L."/>
            <person name="Szybalski W."/>
            <person name="Trautner T.A."/>
            <person name="Van Etten J.L."/>
            <person name="Vitor J.M."/>
            <person name="Wilson G.G."/>
            <person name="Xu S.Y."/>
        </authorList>
    </citation>
    <scope>NOMENCLATURE</scope>
    <scope>SUBTYPES</scope>
</reference>
<proteinExistence type="evidence at protein level"/>
<protein>
    <recommendedName>
        <fullName evidence="2">Type II methyl-directed restriction enzyme DpnI</fullName>
        <shortName>R.DpnI</shortName>
        <ecNumber evidence="1">3.1.21.4</ecNumber>
    </recommendedName>
    <alternativeName>
        <fullName>Endonuclease DpnI</fullName>
    </alternativeName>
    <alternativeName>
        <fullName>Type-2 restriction enzyme DpnI</fullName>
    </alternativeName>
</protein>
<accession>P0A459</accession>
<accession>P09356</accession>
<keyword id="KW-0002">3D-structure</keyword>
<keyword id="KW-0903">Direct protein sequencing</keyword>
<keyword id="KW-0255">Endonuclease</keyword>
<keyword id="KW-0378">Hydrolase</keyword>
<keyword id="KW-0540">Nuclease</keyword>
<keyword id="KW-1185">Reference proteome</keyword>
<keyword id="KW-0680">Restriction system</keyword>
<evidence type="ECO:0000269" key="1">
    <source>
    </source>
</evidence>
<evidence type="ECO:0000303" key="2">
    <source>
    </source>
</evidence>
<evidence type="ECO:0000303" key="3">
    <source>
    </source>
</evidence>
<evidence type="ECO:0000305" key="4"/>
<evidence type="ECO:0007829" key="5">
    <source>
        <dbReference type="PDB" id="4KYW"/>
    </source>
</evidence>
<gene>
    <name evidence="3" type="primary">dpnC</name>
    <name type="ordered locus">SP_1850</name>
</gene>
<feature type="chain" id="PRO_0000077300" description="Type II methyl-directed restriction enzyme DpnI">
    <location>
        <begin position="1"/>
        <end position="254"/>
    </location>
</feature>
<feature type="helix" evidence="5">
    <location>
        <begin position="7"/>
        <end position="10"/>
    </location>
</feature>
<feature type="helix" evidence="5">
    <location>
        <begin position="16"/>
        <end position="31"/>
    </location>
</feature>
<feature type="turn" evidence="5">
    <location>
        <begin position="35"/>
        <end position="37"/>
    </location>
</feature>
<feature type="turn" evidence="5">
    <location>
        <begin position="57"/>
        <end position="59"/>
    </location>
</feature>
<feature type="strand" evidence="5">
    <location>
        <begin position="62"/>
        <end position="70"/>
    </location>
</feature>
<feature type="strand" evidence="5">
    <location>
        <begin position="74"/>
        <end position="80"/>
    </location>
</feature>
<feature type="helix" evidence="5">
    <location>
        <begin position="81"/>
        <end position="87"/>
    </location>
</feature>
<feature type="strand" evidence="5">
    <location>
        <begin position="95"/>
        <end position="101"/>
    </location>
</feature>
<feature type="strand" evidence="5">
    <location>
        <begin position="105"/>
        <end position="113"/>
    </location>
</feature>
<feature type="helix" evidence="5">
    <location>
        <begin position="115"/>
        <end position="117"/>
    </location>
</feature>
<feature type="helix" evidence="5">
    <location>
        <begin position="120"/>
        <end position="122"/>
    </location>
</feature>
<feature type="strand" evidence="5">
    <location>
        <begin position="123"/>
        <end position="125"/>
    </location>
</feature>
<feature type="turn" evidence="5">
    <location>
        <begin position="134"/>
        <end position="137"/>
    </location>
</feature>
<feature type="strand" evidence="5">
    <location>
        <begin position="140"/>
        <end position="144"/>
    </location>
</feature>
<feature type="helix" evidence="5">
    <location>
        <begin position="150"/>
        <end position="152"/>
    </location>
</feature>
<feature type="strand" evidence="5">
    <location>
        <begin position="154"/>
        <end position="158"/>
    </location>
</feature>
<feature type="helix" evidence="5">
    <location>
        <begin position="165"/>
        <end position="175"/>
    </location>
</feature>
<feature type="strand" evidence="5">
    <location>
        <begin position="182"/>
        <end position="184"/>
    </location>
</feature>
<feature type="helix" evidence="5">
    <location>
        <begin position="188"/>
        <end position="198"/>
    </location>
</feature>
<feature type="strand" evidence="5">
    <location>
        <begin position="201"/>
        <end position="205"/>
    </location>
</feature>
<feature type="helix" evidence="5">
    <location>
        <begin position="206"/>
        <end position="209"/>
    </location>
</feature>
<feature type="helix" evidence="5">
    <location>
        <begin position="210"/>
        <end position="212"/>
    </location>
</feature>
<feature type="helix" evidence="5">
    <location>
        <begin position="213"/>
        <end position="219"/>
    </location>
</feature>
<feature type="turn" evidence="5">
    <location>
        <begin position="220"/>
        <end position="222"/>
    </location>
</feature>
<feature type="helix" evidence="5">
    <location>
        <begin position="226"/>
        <end position="239"/>
    </location>
</feature>
<feature type="strand" evidence="5">
    <location>
        <begin position="242"/>
        <end position="245"/>
    </location>
</feature>
<feature type="strand" evidence="5">
    <location>
        <begin position="247"/>
        <end position="253"/>
    </location>
</feature>
<comment type="function">
    <text evidence="1 2">An M and P subtype restriction enzyme that recognizes the double-stranded, methylated sequence 5'-G(Me)ATC-3' and cleaves after A-2.</text>
</comment>
<comment type="catalytic activity">
    <reaction evidence="1">
        <text>Endonucleolytic cleavage of DNA to give specific double-stranded fragments with terminal 5'-phosphates.</text>
        <dbReference type="EC" id="3.1.21.4"/>
    </reaction>
</comment>
<comment type="similarity">
    <text evidence="4">Belongs to the DpnI type II restriction endonuclease family.</text>
</comment>